<name>RLMH_THET2</name>
<accession>Q72GU0</accession>
<keyword id="KW-0963">Cytoplasm</keyword>
<keyword id="KW-0489">Methyltransferase</keyword>
<keyword id="KW-0698">rRNA processing</keyword>
<keyword id="KW-0949">S-adenosyl-L-methionine</keyword>
<keyword id="KW-0808">Transferase</keyword>
<feature type="chain" id="PRO_0000198201" description="Ribosomal RNA large subunit methyltransferase H">
    <location>
        <begin position="1"/>
        <end position="137"/>
    </location>
</feature>
<feature type="binding site" evidence="1">
    <location>
        <position position="56"/>
    </location>
    <ligand>
        <name>S-adenosyl-L-methionine</name>
        <dbReference type="ChEBI" id="CHEBI:59789"/>
    </ligand>
</feature>
<feature type="binding site" evidence="1">
    <location>
        <position position="85"/>
    </location>
    <ligand>
        <name>S-adenosyl-L-methionine</name>
        <dbReference type="ChEBI" id="CHEBI:59789"/>
    </ligand>
</feature>
<feature type="binding site" evidence="1">
    <location>
        <begin position="104"/>
        <end position="109"/>
    </location>
    <ligand>
        <name>S-adenosyl-L-methionine</name>
        <dbReference type="ChEBI" id="CHEBI:59789"/>
    </ligand>
</feature>
<organism>
    <name type="scientific">Thermus thermophilus (strain ATCC BAA-163 / DSM 7039 / HB27)</name>
    <dbReference type="NCBI Taxonomy" id="262724"/>
    <lineage>
        <taxon>Bacteria</taxon>
        <taxon>Thermotogati</taxon>
        <taxon>Deinococcota</taxon>
        <taxon>Deinococci</taxon>
        <taxon>Thermales</taxon>
        <taxon>Thermaceae</taxon>
        <taxon>Thermus</taxon>
    </lineage>
</organism>
<comment type="function">
    <text evidence="1">Specifically methylates the pseudouridine at position 1915 (m3Psi1915) in 23S rRNA.</text>
</comment>
<comment type="catalytic activity">
    <reaction evidence="1">
        <text>pseudouridine(1915) in 23S rRNA + S-adenosyl-L-methionine = N(3)-methylpseudouridine(1915) in 23S rRNA + S-adenosyl-L-homocysteine + H(+)</text>
        <dbReference type="Rhea" id="RHEA:42752"/>
        <dbReference type="Rhea" id="RHEA-COMP:10221"/>
        <dbReference type="Rhea" id="RHEA-COMP:10222"/>
        <dbReference type="ChEBI" id="CHEBI:15378"/>
        <dbReference type="ChEBI" id="CHEBI:57856"/>
        <dbReference type="ChEBI" id="CHEBI:59789"/>
        <dbReference type="ChEBI" id="CHEBI:65314"/>
        <dbReference type="ChEBI" id="CHEBI:74486"/>
        <dbReference type="EC" id="2.1.1.177"/>
    </reaction>
</comment>
<comment type="subunit">
    <text evidence="1">Homodimer.</text>
</comment>
<comment type="subcellular location">
    <subcellularLocation>
        <location evidence="1">Cytoplasm</location>
    </subcellularLocation>
</comment>
<comment type="similarity">
    <text evidence="1">Belongs to the RNA methyltransferase RlmH family.</text>
</comment>
<sequence length="137" mass="15858">MRLRVVAVGRPRLAYARLGVEEYARRMRRYAPLDLVFVRKGEELLPKAEGHRKVVLDERGRLLTTEELYRRLLVWEGERVAFLVGGAEGHPEAVREEADLLLSLSPLTLQHELALLVLMEQLYRVLTLRAGHPYHRP</sequence>
<dbReference type="EC" id="2.1.1.177" evidence="1"/>
<dbReference type="EMBL" id="AE017221">
    <property type="protein sequence ID" value="AAS82100.1"/>
    <property type="molecule type" value="Genomic_DNA"/>
</dbReference>
<dbReference type="RefSeq" id="WP_011174116.1">
    <property type="nucleotide sequence ID" value="NC_005835.1"/>
</dbReference>
<dbReference type="SMR" id="Q72GU0"/>
<dbReference type="KEGG" id="tth:TT_C1758"/>
<dbReference type="eggNOG" id="COG1576">
    <property type="taxonomic scope" value="Bacteria"/>
</dbReference>
<dbReference type="HOGENOM" id="CLU_100552_2_0_0"/>
<dbReference type="OrthoDB" id="9806643at2"/>
<dbReference type="Proteomes" id="UP000000592">
    <property type="component" value="Chromosome"/>
</dbReference>
<dbReference type="GO" id="GO:0005737">
    <property type="term" value="C:cytoplasm"/>
    <property type="evidence" value="ECO:0007669"/>
    <property type="project" value="UniProtKB-SubCell"/>
</dbReference>
<dbReference type="GO" id="GO:0070038">
    <property type="term" value="F:rRNA (pseudouridine-N3-)-methyltransferase activity"/>
    <property type="evidence" value="ECO:0007669"/>
    <property type="project" value="UniProtKB-UniRule"/>
</dbReference>
<dbReference type="CDD" id="cd18081">
    <property type="entry name" value="RlmH-like"/>
    <property type="match status" value="1"/>
</dbReference>
<dbReference type="Gene3D" id="3.40.1280.10">
    <property type="match status" value="1"/>
</dbReference>
<dbReference type="HAMAP" id="MF_00658">
    <property type="entry name" value="23SrRNA_methyltr_H"/>
    <property type="match status" value="1"/>
</dbReference>
<dbReference type="InterPro" id="IPR029028">
    <property type="entry name" value="Alpha/beta_knot_MTases"/>
</dbReference>
<dbReference type="InterPro" id="IPR003742">
    <property type="entry name" value="RlmH-like"/>
</dbReference>
<dbReference type="InterPro" id="IPR029026">
    <property type="entry name" value="tRNA_m1G_MTases_N"/>
</dbReference>
<dbReference type="PANTHER" id="PTHR33603">
    <property type="entry name" value="METHYLTRANSFERASE"/>
    <property type="match status" value="1"/>
</dbReference>
<dbReference type="PANTHER" id="PTHR33603:SF1">
    <property type="entry name" value="RIBOSOMAL RNA LARGE SUBUNIT METHYLTRANSFERASE H"/>
    <property type="match status" value="1"/>
</dbReference>
<dbReference type="Pfam" id="PF02590">
    <property type="entry name" value="SPOUT_MTase"/>
    <property type="match status" value="1"/>
</dbReference>
<dbReference type="PIRSF" id="PIRSF004505">
    <property type="entry name" value="MT_bac"/>
    <property type="match status" value="1"/>
</dbReference>
<dbReference type="SUPFAM" id="SSF75217">
    <property type="entry name" value="alpha/beta knot"/>
    <property type="match status" value="1"/>
</dbReference>
<evidence type="ECO:0000255" key="1">
    <source>
        <dbReference type="HAMAP-Rule" id="MF_00658"/>
    </source>
</evidence>
<reference key="1">
    <citation type="journal article" date="2004" name="Nat. Biotechnol.">
        <title>The genome sequence of the extreme thermophile Thermus thermophilus.</title>
        <authorList>
            <person name="Henne A."/>
            <person name="Brueggemann H."/>
            <person name="Raasch C."/>
            <person name="Wiezer A."/>
            <person name="Hartsch T."/>
            <person name="Liesegang H."/>
            <person name="Johann A."/>
            <person name="Lienard T."/>
            <person name="Gohl O."/>
            <person name="Martinez-Arias R."/>
            <person name="Jacobi C."/>
            <person name="Starkuviene V."/>
            <person name="Schlenczeck S."/>
            <person name="Dencker S."/>
            <person name="Huber R."/>
            <person name="Klenk H.-P."/>
            <person name="Kramer W."/>
            <person name="Merkl R."/>
            <person name="Gottschalk G."/>
            <person name="Fritz H.-J."/>
        </authorList>
    </citation>
    <scope>NUCLEOTIDE SEQUENCE [LARGE SCALE GENOMIC DNA]</scope>
    <source>
        <strain>ATCC BAA-163 / DSM 7039 / HB27</strain>
    </source>
</reference>
<proteinExistence type="inferred from homology"/>
<gene>
    <name evidence="1" type="primary">rlmH</name>
    <name type="ordered locus">TT_C1758</name>
</gene>
<protein>
    <recommendedName>
        <fullName evidence="1">Ribosomal RNA large subunit methyltransferase H</fullName>
        <ecNumber evidence="1">2.1.1.177</ecNumber>
    </recommendedName>
    <alternativeName>
        <fullName evidence="1">23S rRNA (pseudouridine1915-N3)-methyltransferase</fullName>
    </alternativeName>
    <alternativeName>
        <fullName evidence="1">23S rRNA m3Psi1915 methyltransferase</fullName>
    </alternativeName>
    <alternativeName>
        <fullName evidence="1">rRNA (pseudouridine-N3-)-methyltransferase RlmH</fullName>
    </alternativeName>
</protein>